<dbReference type="EC" id="2.4.99.17" evidence="1"/>
<dbReference type="EMBL" id="CP000266">
    <property type="protein sequence ID" value="ABF02642.1"/>
    <property type="molecule type" value="Genomic_DNA"/>
</dbReference>
<dbReference type="RefSeq" id="WP_001266503.1">
    <property type="nucleotide sequence ID" value="NC_008258.1"/>
</dbReference>
<dbReference type="SMR" id="Q0T7I4"/>
<dbReference type="GeneID" id="93777055"/>
<dbReference type="KEGG" id="sfv:SFV_0370"/>
<dbReference type="HOGENOM" id="CLU_039110_1_0_6"/>
<dbReference type="UniPathway" id="UPA00392"/>
<dbReference type="Proteomes" id="UP000000659">
    <property type="component" value="Chromosome"/>
</dbReference>
<dbReference type="GO" id="GO:0005737">
    <property type="term" value="C:cytoplasm"/>
    <property type="evidence" value="ECO:0007669"/>
    <property type="project" value="UniProtKB-SubCell"/>
</dbReference>
<dbReference type="GO" id="GO:0051075">
    <property type="term" value="F:S-adenosylmethionine:tRNA ribosyltransferase-isomerase activity"/>
    <property type="evidence" value="ECO:0007669"/>
    <property type="project" value="UniProtKB-EC"/>
</dbReference>
<dbReference type="GO" id="GO:0008616">
    <property type="term" value="P:queuosine biosynthetic process"/>
    <property type="evidence" value="ECO:0007669"/>
    <property type="project" value="UniProtKB-UniRule"/>
</dbReference>
<dbReference type="GO" id="GO:0002099">
    <property type="term" value="P:tRNA wobble guanine modification"/>
    <property type="evidence" value="ECO:0007669"/>
    <property type="project" value="TreeGrafter"/>
</dbReference>
<dbReference type="FunFam" id="2.40.10.240:FF:000001">
    <property type="entry name" value="S-adenosylmethionine:tRNA ribosyltransferase-isomerase"/>
    <property type="match status" value="1"/>
</dbReference>
<dbReference type="FunFam" id="3.40.1780.10:FF:000001">
    <property type="entry name" value="S-adenosylmethionine:tRNA ribosyltransferase-isomerase"/>
    <property type="match status" value="1"/>
</dbReference>
<dbReference type="Gene3D" id="2.40.10.240">
    <property type="entry name" value="QueA-like"/>
    <property type="match status" value="1"/>
</dbReference>
<dbReference type="Gene3D" id="3.40.1780.10">
    <property type="entry name" value="QueA-like"/>
    <property type="match status" value="1"/>
</dbReference>
<dbReference type="HAMAP" id="MF_00113">
    <property type="entry name" value="QueA"/>
    <property type="match status" value="1"/>
</dbReference>
<dbReference type="InterPro" id="IPR003699">
    <property type="entry name" value="QueA"/>
</dbReference>
<dbReference type="InterPro" id="IPR042118">
    <property type="entry name" value="QueA_dom1"/>
</dbReference>
<dbReference type="InterPro" id="IPR042119">
    <property type="entry name" value="QueA_dom2"/>
</dbReference>
<dbReference type="InterPro" id="IPR036100">
    <property type="entry name" value="QueA_sf"/>
</dbReference>
<dbReference type="NCBIfam" id="NF001140">
    <property type="entry name" value="PRK00147.1"/>
    <property type="match status" value="1"/>
</dbReference>
<dbReference type="NCBIfam" id="TIGR00113">
    <property type="entry name" value="queA"/>
    <property type="match status" value="1"/>
</dbReference>
<dbReference type="PANTHER" id="PTHR30307">
    <property type="entry name" value="S-ADENOSYLMETHIONINE:TRNA RIBOSYLTRANSFERASE-ISOMERASE"/>
    <property type="match status" value="1"/>
</dbReference>
<dbReference type="PANTHER" id="PTHR30307:SF0">
    <property type="entry name" value="S-ADENOSYLMETHIONINE:TRNA RIBOSYLTRANSFERASE-ISOMERASE"/>
    <property type="match status" value="1"/>
</dbReference>
<dbReference type="Pfam" id="PF02547">
    <property type="entry name" value="Queuosine_synth"/>
    <property type="match status" value="1"/>
</dbReference>
<dbReference type="SUPFAM" id="SSF111337">
    <property type="entry name" value="QueA-like"/>
    <property type="match status" value="1"/>
</dbReference>
<feature type="chain" id="PRO_1000015278" description="S-adenosylmethionine:tRNA ribosyltransferase-isomerase">
    <location>
        <begin position="1"/>
        <end position="356"/>
    </location>
</feature>
<reference key="1">
    <citation type="journal article" date="2006" name="BMC Genomics">
        <title>Complete genome sequence of Shigella flexneri 5b and comparison with Shigella flexneri 2a.</title>
        <authorList>
            <person name="Nie H."/>
            <person name="Yang F."/>
            <person name="Zhang X."/>
            <person name="Yang J."/>
            <person name="Chen L."/>
            <person name="Wang J."/>
            <person name="Xiong Z."/>
            <person name="Peng J."/>
            <person name="Sun L."/>
            <person name="Dong J."/>
            <person name="Xue Y."/>
            <person name="Xu X."/>
            <person name="Chen S."/>
            <person name="Yao Z."/>
            <person name="Shen Y."/>
            <person name="Jin Q."/>
        </authorList>
    </citation>
    <scope>NUCLEOTIDE SEQUENCE [LARGE SCALE GENOMIC DNA]</scope>
    <source>
        <strain>8401</strain>
    </source>
</reference>
<comment type="function">
    <text evidence="1">Transfers and isomerizes the ribose moiety from AdoMet to the 7-aminomethyl group of 7-deazaguanine (preQ1-tRNA) to give epoxyqueuosine (oQ-tRNA).</text>
</comment>
<comment type="catalytic activity">
    <reaction evidence="1">
        <text>7-aminomethyl-7-carbaguanosine(34) in tRNA + S-adenosyl-L-methionine = epoxyqueuosine(34) in tRNA + adenine + L-methionine + 2 H(+)</text>
        <dbReference type="Rhea" id="RHEA:32155"/>
        <dbReference type="Rhea" id="RHEA-COMP:10342"/>
        <dbReference type="Rhea" id="RHEA-COMP:18582"/>
        <dbReference type="ChEBI" id="CHEBI:15378"/>
        <dbReference type="ChEBI" id="CHEBI:16708"/>
        <dbReference type="ChEBI" id="CHEBI:57844"/>
        <dbReference type="ChEBI" id="CHEBI:59789"/>
        <dbReference type="ChEBI" id="CHEBI:82833"/>
        <dbReference type="ChEBI" id="CHEBI:194443"/>
        <dbReference type="EC" id="2.4.99.17"/>
    </reaction>
</comment>
<comment type="pathway">
    <text evidence="1">tRNA modification; tRNA-queuosine biosynthesis.</text>
</comment>
<comment type="subunit">
    <text evidence="1">Monomer.</text>
</comment>
<comment type="subcellular location">
    <subcellularLocation>
        <location evidence="1">Cytoplasm</location>
    </subcellularLocation>
</comment>
<comment type="similarity">
    <text evidence="1">Belongs to the QueA family.</text>
</comment>
<protein>
    <recommendedName>
        <fullName evidence="1">S-adenosylmethionine:tRNA ribosyltransferase-isomerase</fullName>
        <ecNumber evidence="1">2.4.99.17</ecNumber>
    </recommendedName>
    <alternativeName>
        <fullName evidence="1">Queuosine biosynthesis protein QueA</fullName>
    </alternativeName>
</protein>
<organism>
    <name type="scientific">Shigella flexneri serotype 5b (strain 8401)</name>
    <dbReference type="NCBI Taxonomy" id="373384"/>
    <lineage>
        <taxon>Bacteria</taxon>
        <taxon>Pseudomonadati</taxon>
        <taxon>Pseudomonadota</taxon>
        <taxon>Gammaproteobacteria</taxon>
        <taxon>Enterobacterales</taxon>
        <taxon>Enterobacteriaceae</taxon>
        <taxon>Shigella</taxon>
    </lineage>
</organism>
<proteinExistence type="inferred from homology"/>
<evidence type="ECO:0000255" key="1">
    <source>
        <dbReference type="HAMAP-Rule" id="MF_00113"/>
    </source>
</evidence>
<name>QUEA_SHIF8</name>
<sequence>MRVTDFSFELPESLIAHYPMPERSSCRLLSLDGPTGALTHGTFTDLLDKLNPGDLLVFNNTRVIPARLFGRKASGGKIEVLVERMLDDKRILAHIRASKAPKPGAELLLGDDESINATMTARHGALFEVEFNDERSVLDILNSIGHMPLPPYIDRPDEDADRELYQTVYSEKPGAVAAPTAGLHFDEPLLEKLRAKGVEMAFVTLHVGAGTFQPVRVDTIEDHIMHSEYAEVPQDVVDAVLAAKARGNRVIAVGTTSVRSLESAAQAAKNDLIEPFFDDTQIFIYPGFQYKVVDALVTNFHLPESTLIMLVSAFAGYQHTMNAYKAAVEEKYRFFSYGDAMFITYNPQAINERVGE</sequence>
<gene>
    <name evidence="1" type="primary">queA</name>
    <name type="ordered locus">SFV_0370</name>
</gene>
<keyword id="KW-0963">Cytoplasm</keyword>
<keyword id="KW-0671">Queuosine biosynthesis</keyword>
<keyword id="KW-0949">S-adenosyl-L-methionine</keyword>
<keyword id="KW-0808">Transferase</keyword>
<accession>Q0T7I4</accession>